<accession>Q8ZJ77</accession>
<accession>Q0WK63</accession>
<evidence type="ECO:0000255" key="1">
    <source>
        <dbReference type="HAMAP-Rule" id="MF_00598"/>
    </source>
</evidence>
<evidence type="ECO:0000305" key="2"/>
<dbReference type="EMBL" id="AL590842">
    <property type="protein sequence ID" value="CAL18927.1"/>
    <property type="status" value="ALT_INIT"/>
    <property type="molecule type" value="Genomic_DNA"/>
</dbReference>
<dbReference type="EMBL" id="AE009952">
    <property type="protein sequence ID" value="AAM87569.1"/>
    <property type="molecule type" value="Genomic_DNA"/>
</dbReference>
<dbReference type="EMBL" id="AE017042">
    <property type="protein sequence ID" value="AAS60518.1"/>
    <property type="molecule type" value="Genomic_DNA"/>
</dbReference>
<dbReference type="PIR" id="AE0030">
    <property type="entry name" value="AE0030"/>
</dbReference>
<dbReference type="RefSeq" id="WP_002209023.1">
    <property type="nucleotide sequence ID" value="NZ_WUCM01000078.1"/>
</dbReference>
<dbReference type="RefSeq" id="YP_002345325.1">
    <property type="nucleotide sequence ID" value="NC_003143.1"/>
</dbReference>
<dbReference type="SMR" id="Q8ZJ77"/>
<dbReference type="STRING" id="214092.YPO0244"/>
<dbReference type="PaxDb" id="214092-YPO0244"/>
<dbReference type="DNASU" id="1148972"/>
<dbReference type="EnsemblBacteria" id="AAS60518">
    <property type="protein sequence ID" value="AAS60518"/>
    <property type="gene ID" value="YP_0242"/>
</dbReference>
<dbReference type="KEGG" id="ype:YPO0244"/>
<dbReference type="KEGG" id="ypk:y4025"/>
<dbReference type="KEGG" id="ypm:YP_0242"/>
<dbReference type="PATRIC" id="fig|214092.21.peg.472"/>
<dbReference type="eggNOG" id="COG2922">
    <property type="taxonomic scope" value="Bacteria"/>
</dbReference>
<dbReference type="HOGENOM" id="CLU_133242_0_0_6"/>
<dbReference type="OMA" id="DLKWVVM"/>
<dbReference type="OrthoDB" id="9788984at2"/>
<dbReference type="Proteomes" id="UP000000815">
    <property type="component" value="Chromosome"/>
</dbReference>
<dbReference type="Proteomes" id="UP000001019">
    <property type="component" value="Chromosome"/>
</dbReference>
<dbReference type="Proteomes" id="UP000002490">
    <property type="component" value="Chromosome"/>
</dbReference>
<dbReference type="HAMAP" id="MF_00598">
    <property type="entry name" value="Smg"/>
    <property type="match status" value="1"/>
</dbReference>
<dbReference type="InterPro" id="IPR007456">
    <property type="entry name" value="Smg"/>
</dbReference>
<dbReference type="NCBIfam" id="NF002897">
    <property type="entry name" value="PRK03430.1"/>
    <property type="match status" value="1"/>
</dbReference>
<dbReference type="PANTHER" id="PTHR38692">
    <property type="entry name" value="PROTEIN SMG"/>
    <property type="match status" value="1"/>
</dbReference>
<dbReference type="PANTHER" id="PTHR38692:SF1">
    <property type="entry name" value="PROTEIN SMG"/>
    <property type="match status" value="1"/>
</dbReference>
<dbReference type="Pfam" id="PF04361">
    <property type="entry name" value="DUF494"/>
    <property type="match status" value="1"/>
</dbReference>
<gene>
    <name evidence="1" type="primary">smg</name>
    <name type="ordered locus">YPO0244</name>
    <name type="ordered locus">y4025</name>
    <name type="ordered locus">YP_0242</name>
</gene>
<comment type="similarity">
    <text evidence="1">Belongs to the Smg family.</text>
</comment>
<comment type="sequence caution" evidence="2">
    <conflict type="erroneous initiation">
        <sequence resource="EMBL-CDS" id="CAL18927"/>
    </conflict>
</comment>
<sequence>MFDVLIYLFETYMHNEPEMLVDQDKITDDLADAGFYREDINNALNWLEVLADLQEGQKAPYLYTADPQALRIYTVEECRRLGAACRGFILFLEQIQVLQFDTREMVIDRIMALDSPEIDLEDLKWVVLMVLFNIPGYENAYKQMEELLFEVNDGYLH</sequence>
<reference key="1">
    <citation type="journal article" date="2001" name="Nature">
        <title>Genome sequence of Yersinia pestis, the causative agent of plague.</title>
        <authorList>
            <person name="Parkhill J."/>
            <person name="Wren B.W."/>
            <person name="Thomson N.R."/>
            <person name="Titball R.W."/>
            <person name="Holden M.T.G."/>
            <person name="Prentice M.B."/>
            <person name="Sebaihia M."/>
            <person name="James K.D."/>
            <person name="Churcher C.M."/>
            <person name="Mungall K.L."/>
            <person name="Baker S."/>
            <person name="Basham D."/>
            <person name="Bentley S.D."/>
            <person name="Brooks K."/>
            <person name="Cerdeno-Tarraga A.-M."/>
            <person name="Chillingworth T."/>
            <person name="Cronin A."/>
            <person name="Davies R.M."/>
            <person name="Davis P."/>
            <person name="Dougan G."/>
            <person name="Feltwell T."/>
            <person name="Hamlin N."/>
            <person name="Holroyd S."/>
            <person name="Jagels K."/>
            <person name="Karlyshev A.V."/>
            <person name="Leather S."/>
            <person name="Moule S."/>
            <person name="Oyston P.C.F."/>
            <person name="Quail M.A."/>
            <person name="Rutherford K.M."/>
            <person name="Simmonds M."/>
            <person name="Skelton J."/>
            <person name="Stevens K."/>
            <person name="Whitehead S."/>
            <person name="Barrell B.G."/>
        </authorList>
    </citation>
    <scope>NUCLEOTIDE SEQUENCE [LARGE SCALE GENOMIC DNA]</scope>
    <source>
        <strain>CO-92 / Biovar Orientalis</strain>
    </source>
</reference>
<reference key="2">
    <citation type="journal article" date="2002" name="J. Bacteriol.">
        <title>Genome sequence of Yersinia pestis KIM.</title>
        <authorList>
            <person name="Deng W."/>
            <person name="Burland V."/>
            <person name="Plunkett G. III"/>
            <person name="Boutin A."/>
            <person name="Mayhew G.F."/>
            <person name="Liss P."/>
            <person name="Perna N.T."/>
            <person name="Rose D.J."/>
            <person name="Mau B."/>
            <person name="Zhou S."/>
            <person name="Schwartz D.C."/>
            <person name="Fetherston J.D."/>
            <person name="Lindler L.E."/>
            <person name="Brubaker R.R."/>
            <person name="Plano G.V."/>
            <person name="Straley S.C."/>
            <person name="McDonough K.A."/>
            <person name="Nilles M.L."/>
            <person name="Matson J.S."/>
            <person name="Blattner F.R."/>
            <person name="Perry R.D."/>
        </authorList>
    </citation>
    <scope>NUCLEOTIDE SEQUENCE [LARGE SCALE GENOMIC DNA]</scope>
    <source>
        <strain>KIM10+ / Biovar Mediaevalis</strain>
    </source>
</reference>
<reference key="3">
    <citation type="journal article" date="2004" name="DNA Res.">
        <title>Complete genome sequence of Yersinia pestis strain 91001, an isolate avirulent to humans.</title>
        <authorList>
            <person name="Song Y."/>
            <person name="Tong Z."/>
            <person name="Wang J."/>
            <person name="Wang L."/>
            <person name="Guo Z."/>
            <person name="Han Y."/>
            <person name="Zhang J."/>
            <person name="Pei D."/>
            <person name="Zhou D."/>
            <person name="Qin H."/>
            <person name="Pang X."/>
            <person name="Han Y."/>
            <person name="Zhai J."/>
            <person name="Li M."/>
            <person name="Cui B."/>
            <person name="Qi Z."/>
            <person name="Jin L."/>
            <person name="Dai R."/>
            <person name="Chen F."/>
            <person name="Li S."/>
            <person name="Ye C."/>
            <person name="Du Z."/>
            <person name="Lin W."/>
            <person name="Wang J."/>
            <person name="Yu J."/>
            <person name="Yang H."/>
            <person name="Wang J."/>
            <person name="Huang P."/>
            <person name="Yang R."/>
        </authorList>
    </citation>
    <scope>NUCLEOTIDE SEQUENCE [LARGE SCALE GENOMIC DNA]</scope>
    <source>
        <strain>91001 / Biovar Mediaevalis</strain>
    </source>
</reference>
<organism>
    <name type="scientific">Yersinia pestis</name>
    <dbReference type="NCBI Taxonomy" id="632"/>
    <lineage>
        <taxon>Bacteria</taxon>
        <taxon>Pseudomonadati</taxon>
        <taxon>Pseudomonadota</taxon>
        <taxon>Gammaproteobacteria</taxon>
        <taxon>Enterobacterales</taxon>
        <taxon>Yersiniaceae</taxon>
        <taxon>Yersinia</taxon>
    </lineage>
</organism>
<protein>
    <recommendedName>
        <fullName evidence="1">Protein Smg</fullName>
    </recommendedName>
</protein>
<proteinExistence type="inferred from homology"/>
<feature type="chain" id="PRO_0000209193" description="Protein Smg">
    <location>
        <begin position="1"/>
        <end position="157"/>
    </location>
</feature>
<keyword id="KW-1185">Reference proteome</keyword>
<name>SMG_YERPE</name>